<dbReference type="EMBL" id="M86739">
    <property type="status" value="NOT_ANNOTATED_CDS"/>
    <property type="molecule type" value="mRNA"/>
</dbReference>
<dbReference type="EMBL" id="AF399642">
    <property type="protein sequence ID" value="AAK94452.1"/>
    <property type="molecule type" value="mRNA"/>
</dbReference>
<dbReference type="EMBL" id="BC105217">
    <property type="protein sequence ID" value="AAI05218.1"/>
    <property type="molecule type" value="mRNA"/>
</dbReference>
<dbReference type="PIR" id="S28787">
    <property type="entry name" value="S28787"/>
</dbReference>
<dbReference type="RefSeq" id="NP_776726.1">
    <property type="nucleotide sequence ID" value="NM_174301.3"/>
</dbReference>
<dbReference type="SMR" id="P25930"/>
<dbReference type="FunCoup" id="P25930">
    <property type="interactions" value="702"/>
</dbReference>
<dbReference type="STRING" id="9913.ENSBTAP00000001406"/>
<dbReference type="BindingDB" id="P25930"/>
<dbReference type="GlyCosmos" id="P25930">
    <property type="glycosylation" value="2 sites, No reported glycans"/>
</dbReference>
<dbReference type="GlyGen" id="P25930">
    <property type="glycosylation" value="2 sites"/>
</dbReference>
<dbReference type="PaxDb" id="9913-ENSBTAP00000001406"/>
<dbReference type="GeneID" id="281736"/>
<dbReference type="KEGG" id="bta:281736"/>
<dbReference type="CTD" id="7852"/>
<dbReference type="VEuPathDB" id="HostDB:ENSBTAG00000001060"/>
<dbReference type="eggNOG" id="KOG3656">
    <property type="taxonomic scope" value="Eukaryota"/>
</dbReference>
<dbReference type="HOGENOM" id="CLU_009579_8_3_1"/>
<dbReference type="InParanoid" id="P25930"/>
<dbReference type="OMA" id="YVCQRFY"/>
<dbReference type="OrthoDB" id="8413490at2759"/>
<dbReference type="TreeFam" id="TF330966"/>
<dbReference type="Reactome" id="R-BTA-376176">
    <property type="pathway name" value="Signaling by ROBO receptors"/>
</dbReference>
<dbReference type="Reactome" id="R-BTA-380108">
    <property type="pathway name" value="Chemokine receptors bind chemokines"/>
</dbReference>
<dbReference type="Reactome" id="R-BTA-418594">
    <property type="pathway name" value="G alpha (i) signalling events"/>
</dbReference>
<dbReference type="Proteomes" id="UP000009136">
    <property type="component" value="Chromosome 2"/>
</dbReference>
<dbReference type="Bgee" id="ENSBTAG00000001060">
    <property type="expression patterns" value="Expressed in milk and 104 other cell types or tissues"/>
</dbReference>
<dbReference type="GO" id="GO:0070161">
    <property type="term" value="C:anchoring junction"/>
    <property type="evidence" value="ECO:0007669"/>
    <property type="project" value="UniProtKB-SubCell"/>
</dbReference>
<dbReference type="GO" id="GO:0005769">
    <property type="term" value="C:early endosome"/>
    <property type="evidence" value="ECO:0000250"/>
    <property type="project" value="UniProtKB"/>
</dbReference>
<dbReference type="GO" id="GO:0009897">
    <property type="term" value="C:external side of plasma membrane"/>
    <property type="evidence" value="ECO:0000318"/>
    <property type="project" value="GO_Central"/>
</dbReference>
<dbReference type="GO" id="GO:0005770">
    <property type="term" value="C:late endosome"/>
    <property type="evidence" value="ECO:0000250"/>
    <property type="project" value="UniProtKB"/>
</dbReference>
<dbReference type="GO" id="GO:0005764">
    <property type="term" value="C:lysosome"/>
    <property type="evidence" value="ECO:0000250"/>
    <property type="project" value="UniProtKB"/>
</dbReference>
<dbReference type="GO" id="GO:0005886">
    <property type="term" value="C:plasma membrane"/>
    <property type="evidence" value="ECO:0000250"/>
    <property type="project" value="UniProtKB"/>
</dbReference>
<dbReference type="GO" id="GO:0019957">
    <property type="term" value="F:C-C chemokine binding"/>
    <property type="evidence" value="ECO:0000318"/>
    <property type="project" value="GO_Central"/>
</dbReference>
<dbReference type="GO" id="GO:0016493">
    <property type="term" value="F:C-C chemokine receptor activity"/>
    <property type="evidence" value="ECO:0000318"/>
    <property type="project" value="GO_Central"/>
</dbReference>
<dbReference type="GO" id="GO:0038147">
    <property type="term" value="F:C-X-C motif chemokine 12 receptor activity"/>
    <property type="evidence" value="ECO:0000250"/>
    <property type="project" value="UniProtKB"/>
</dbReference>
<dbReference type="GO" id="GO:0007420">
    <property type="term" value="P:brain development"/>
    <property type="evidence" value="ECO:0000318"/>
    <property type="project" value="GO_Central"/>
</dbReference>
<dbReference type="GO" id="GO:0019722">
    <property type="term" value="P:calcium-mediated signaling"/>
    <property type="evidence" value="ECO:0000318"/>
    <property type="project" value="GO_Central"/>
</dbReference>
<dbReference type="GO" id="GO:0060326">
    <property type="term" value="P:cell chemotaxis"/>
    <property type="evidence" value="ECO:0000318"/>
    <property type="project" value="GO_Central"/>
</dbReference>
<dbReference type="GO" id="GO:0071345">
    <property type="term" value="P:cellular response to cytokine stimulus"/>
    <property type="evidence" value="ECO:0000250"/>
    <property type="project" value="UniProtKB"/>
</dbReference>
<dbReference type="GO" id="GO:0038160">
    <property type="term" value="P:CXCL12-activated CXCR4 signaling pathway"/>
    <property type="evidence" value="ECO:0000250"/>
    <property type="project" value="UniProtKB"/>
</dbReference>
<dbReference type="GO" id="GO:0006955">
    <property type="term" value="P:immune response"/>
    <property type="evidence" value="ECO:0000318"/>
    <property type="project" value="GO_Central"/>
</dbReference>
<dbReference type="GO" id="GO:0022008">
    <property type="term" value="P:neurogenesis"/>
    <property type="evidence" value="ECO:0000318"/>
    <property type="project" value="GO_Central"/>
</dbReference>
<dbReference type="GO" id="GO:0007204">
    <property type="term" value="P:positive regulation of cytosolic calcium ion concentration"/>
    <property type="evidence" value="ECO:0000318"/>
    <property type="project" value="GO_Central"/>
</dbReference>
<dbReference type="CDD" id="cd15179">
    <property type="entry name" value="7tmA_CXCR4"/>
    <property type="match status" value="1"/>
</dbReference>
<dbReference type="FunFam" id="1.20.1070.10:FF:000063">
    <property type="entry name" value="C-X-C chemokine receptor type 4"/>
    <property type="match status" value="1"/>
</dbReference>
<dbReference type="Gene3D" id="1.20.1070.10">
    <property type="entry name" value="Rhodopsin 7-helix transmembrane proteins"/>
    <property type="match status" value="1"/>
</dbReference>
<dbReference type="InterPro" id="IPR050119">
    <property type="entry name" value="CCR1-9-like"/>
</dbReference>
<dbReference type="InterPro" id="IPR022726">
    <property type="entry name" value="Chemokine_CXCR4_N_dom"/>
</dbReference>
<dbReference type="InterPro" id="IPR000355">
    <property type="entry name" value="Chemokine_rcpt"/>
</dbReference>
<dbReference type="InterPro" id="IPR001277">
    <property type="entry name" value="CXCR4/ACKR2"/>
</dbReference>
<dbReference type="InterPro" id="IPR000276">
    <property type="entry name" value="GPCR_Rhodpsn"/>
</dbReference>
<dbReference type="InterPro" id="IPR017452">
    <property type="entry name" value="GPCR_Rhodpsn_7TM"/>
</dbReference>
<dbReference type="PANTHER" id="PTHR10489:SF594">
    <property type="entry name" value="C-X-C CHEMOKINE RECEPTOR TYPE 4"/>
    <property type="match status" value="1"/>
</dbReference>
<dbReference type="PANTHER" id="PTHR10489">
    <property type="entry name" value="CELL ADHESION MOLECULE"/>
    <property type="match status" value="1"/>
</dbReference>
<dbReference type="Pfam" id="PF00001">
    <property type="entry name" value="7tm_1"/>
    <property type="match status" value="1"/>
</dbReference>
<dbReference type="Pfam" id="PF12109">
    <property type="entry name" value="CXCR4_N"/>
    <property type="match status" value="1"/>
</dbReference>
<dbReference type="PRINTS" id="PR00657">
    <property type="entry name" value="CCCHEMOKINER"/>
</dbReference>
<dbReference type="PRINTS" id="PR00645">
    <property type="entry name" value="CXCCHMKINER4"/>
</dbReference>
<dbReference type="PRINTS" id="PR00237">
    <property type="entry name" value="GPCRRHODOPSN"/>
</dbReference>
<dbReference type="SUPFAM" id="SSF81321">
    <property type="entry name" value="Family A G protein-coupled receptor-like"/>
    <property type="match status" value="1"/>
</dbReference>
<dbReference type="PROSITE" id="PS00237">
    <property type="entry name" value="G_PROTEIN_RECEP_F1_1"/>
    <property type="match status" value="1"/>
</dbReference>
<dbReference type="PROSITE" id="PS50262">
    <property type="entry name" value="G_PROTEIN_RECEP_F1_2"/>
    <property type="match status" value="1"/>
</dbReference>
<name>CXCR4_BOVIN</name>
<reference key="1">
    <citation type="journal article" date="1991" name="Mol. Pharmacol.">
        <title>Sequence and expression of a neuropeptide Y receptor cDNA.</title>
        <authorList>
            <person name="Rimland J."/>
            <person name="Xin W."/>
            <person name="Sweetnam P."/>
            <person name="Saijoh K."/>
            <person name="Nestler E.J."/>
            <person name="Duman R.S."/>
        </authorList>
    </citation>
    <scope>NUCLEOTIDE SEQUENCE [MRNA]</scope>
    <scope>TISSUE SPECIFICITY</scope>
    <source>
        <tissue>Locus coeruleus</tissue>
    </source>
</reference>
<reference key="2">
    <citation type="submission" date="2001-07" db="EMBL/GenBank/DDBJ databases">
        <title>Role of chemokines in respiratory syncytial virus infection.</title>
        <authorList>
            <person name="Werling D."/>
        </authorList>
    </citation>
    <scope>NUCLEOTIDE SEQUENCE [MRNA]</scope>
</reference>
<reference key="3">
    <citation type="submission" date="2005-09" db="EMBL/GenBank/DDBJ databases">
        <authorList>
            <consortium name="NIH - Mammalian Gene Collection (MGC) project"/>
        </authorList>
    </citation>
    <scope>NUCLEOTIDE SEQUENCE [LARGE SCALE MRNA]</scope>
    <source>
        <strain>Hereford</strain>
        <tissue>Thymus</tissue>
    </source>
</reference>
<reference key="4">
    <citation type="journal article" date="1993" name="Regul. Pept.">
        <title>A proposed bovine neuropeptide Y (NPY) receptor cDNA clone, or its human homologue, confers neither NPY binding sites nor NPY responsiveness on transfected cells.</title>
        <authorList>
            <person name="Jazin E.E."/>
            <person name="Yoo H."/>
            <person name="Blomqvist A.G."/>
            <person name="Yee F."/>
            <person name="Weng G."/>
            <person name="Walker M.W."/>
            <person name="Salon J."/>
            <person name="Larhammar D."/>
            <person name="Wahlestedt C.R."/>
        </authorList>
    </citation>
    <scope>SHOWS THAT IT IS NOT A NPY3R</scope>
</reference>
<sequence>MEGIRIFTSDNYTEDDLGSGDYDSMKEPCFREENAHFNRIFLPTVYSIIFLTGIVGNGLVILVMGYQKKLRSMTDKYRLHLSVADLLFVLTLPFWAVDAVANWYFGKFLCKAVHVIYTVNLYSSVLILAFISLDRYLAIVHATNSQKPRKLLAEKVVYVGVWLPAVLLTIPDLIFADIKEVDERYICDRFYPSDLWLVVFQFQHIVVGLLLPGIVILSCYCIIISKLSHSKGYQKRKALKTTVILILTFFACWLPYYIGISIDSFILLEIIQQGCEFESTVHKWISITEALAFFHCCLNPILYAFLGAKFKTSAQHALTSVSRGSSLKILSKGKRGGHSSVSTESESSSFHSS</sequence>
<gene>
    <name type="primary">CXCR4</name>
</gene>
<accession>P25930</accession>
<accession>Q3MHJ3</accession>
<organism>
    <name type="scientific">Bos taurus</name>
    <name type="common">Bovine</name>
    <dbReference type="NCBI Taxonomy" id="9913"/>
    <lineage>
        <taxon>Eukaryota</taxon>
        <taxon>Metazoa</taxon>
        <taxon>Chordata</taxon>
        <taxon>Craniata</taxon>
        <taxon>Vertebrata</taxon>
        <taxon>Euteleostomi</taxon>
        <taxon>Mammalia</taxon>
        <taxon>Eutheria</taxon>
        <taxon>Laurasiatheria</taxon>
        <taxon>Artiodactyla</taxon>
        <taxon>Ruminantia</taxon>
        <taxon>Pecora</taxon>
        <taxon>Bovidae</taxon>
        <taxon>Bovinae</taxon>
        <taxon>Bos</taxon>
    </lineage>
</organism>
<proteinExistence type="evidence at transcript level"/>
<feature type="chain" id="PRO_0000069349" description="C-X-C chemokine receptor type 4">
    <location>
        <begin position="1"/>
        <end position="353"/>
    </location>
</feature>
<feature type="topological domain" description="Extracellular" evidence="7">
    <location>
        <begin position="1"/>
        <end position="39"/>
    </location>
</feature>
<feature type="transmembrane region" description="Helical; Name=1" evidence="2">
    <location>
        <begin position="40"/>
        <end position="64"/>
    </location>
</feature>
<feature type="topological domain" description="Cytoplasmic" evidence="7">
    <location>
        <begin position="65"/>
        <end position="78"/>
    </location>
</feature>
<feature type="transmembrane region" description="Helical; Name=2" evidence="2">
    <location>
        <begin position="79"/>
        <end position="100"/>
    </location>
</feature>
<feature type="topological domain" description="Extracellular" evidence="7">
    <location>
        <begin position="101"/>
        <end position="111"/>
    </location>
</feature>
<feature type="transmembrane region" description="Helical; Name=3" evidence="2">
    <location>
        <begin position="112"/>
        <end position="131"/>
    </location>
</feature>
<feature type="topological domain" description="Cytoplasmic" evidence="7">
    <location>
        <begin position="132"/>
        <end position="155"/>
    </location>
</feature>
<feature type="transmembrane region" description="Helical; Name=4" evidence="2">
    <location>
        <begin position="156"/>
        <end position="175"/>
    </location>
</feature>
<feature type="topological domain" description="Extracellular" evidence="7">
    <location>
        <begin position="176"/>
        <end position="196"/>
    </location>
</feature>
<feature type="transmembrane region" description="Helical; Name=5" evidence="2">
    <location>
        <begin position="197"/>
        <end position="217"/>
    </location>
</feature>
<feature type="topological domain" description="Cytoplasmic" evidence="7">
    <location>
        <begin position="218"/>
        <end position="242"/>
    </location>
</feature>
<feature type="transmembrane region" description="Helical; Name=6" evidence="2">
    <location>
        <begin position="243"/>
        <end position="262"/>
    </location>
</feature>
<feature type="topological domain" description="Extracellular" evidence="7">
    <location>
        <begin position="263"/>
        <end position="283"/>
    </location>
</feature>
<feature type="transmembrane region" description="Helical; Name=7" evidence="2">
    <location>
        <begin position="284"/>
        <end position="303"/>
    </location>
</feature>
<feature type="topological domain" description="Cytoplasmic" evidence="7">
    <location>
        <begin position="304"/>
        <end position="353"/>
    </location>
</feature>
<feature type="region of interest" description="Important for chemokine binding and signaling" evidence="1">
    <location>
        <begin position="1"/>
        <end position="22"/>
    </location>
</feature>
<feature type="region of interest" description="Chemokine binding" evidence="1">
    <location>
        <begin position="95"/>
        <end position="98"/>
    </location>
</feature>
<feature type="region of interest" description="Chemokine binding" evidence="1">
    <location>
        <begin position="114"/>
        <end position="118"/>
    </location>
</feature>
<feature type="region of interest" description="Involved in dimerization; when bound to chemokine" evidence="1">
    <location>
        <begin position="136"/>
        <end position="148"/>
    </location>
</feature>
<feature type="region of interest" description="Chemokine binding, important for signaling" evidence="1">
    <location>
        <begin position="187"/>
        <end position="191"/>
    </location>
</feature>
<feature type="region of interest" description="Involved in dimerization" evidence="1">
    <location>
        <begin position="192"/>
        <end position="211"/>
    </location>
</feature>
<feature type="region of interest" description="Involved in dimerization" evidence="1">
    <location>
        <begin position="267"/>
        <end position="269"/>
    </location>
</feature>
<feature type="region of interest" description="Disordered" evidence="5">
    <location>
        <begin position="330"/>
        <end position="353"/>
    </location>
</feature>
<feature type="short sequence motif" description="Important for signaling" evidence="1">
    <location>
        <begin position="134"/>
        <end position="136"/>
    </location>
</feature>
<feature type="compositionally biased region" description="Low complexity" evidence="5">
    <location>
        <begin position="338"/>
        <end position="353"/>
    </location>
</feature>
<feature type="site" description="Chemokine binding" evidence="1">
    <location>
        <position position="172"/>
    </location>
</feature>
<feature type="site" description="Chemokine binding" evidence="1">
    <location>
        <position position="289"/>
    </location>
</feature>
<feature type="modified residue" description="Sulfotyrosine" evidence="2">
    <location>
        <position position="12"/>
    </location>
</feature>
<feature type="modified residue" description="Sulfotyrosine" evidence="2">
    <location>
        <position position="22"/>
    </location>
</feature>
<feature type="modified residue" description="Phosphoserine" evidence="2">
    <location>
        <position position="320"/>
    </location>
</feature>
<feature type="modified residue" description="Phosphoserine" evidence="2">
    <location>
        <position position="322"/>
    </location>
</feature>
<feature type="modified residue" description="Phosphoserine; by PKC and GRK6" evidence="2">
    <location>
        <position position="325"/>
    </location>
</feature>
<feature type="modified residue" description="Phosphoserine; by PKC and GRK6" evidence="2">
    <location>
        <position position="326"/>
    </location>
</feature>
<feature type="modified residue" description="Phosphoserine; by GRK6" evidence="2">
    <location>
        <position position="331"/>
    </location>
</feature>
<feature type="modified residue" description="Phosphoserine; by GRK6" evidence="2">
    <location>
        <position position="340"/>
    </location>
</feature>
<feature type="modified residue" description="Phosphoserine" evidence="2">
    <location>
        <position position="349"/>
    </location>
</feature>
<feature type="modified residue" description="Phosphoserine" evidence="2">
    <location>
        <position position="352"/>
    </location>
</feature>
<feature type="glycosylation site" description="N-linked (GlcNAc...) asparagine" evidence="1">
    <location>
        <position position="11"/>
    </location>
</feature>
<feature type="glycosylation site" description="O-linked (Xyl...) (chondroitin sulfate) serine" evidence="2">
    <location>
        <position position="19"/>
    </location>
</feature>
<feature type="disulfide bond" evidence="4">
    <location>
        <begin position="29"/>
        <end position="275"/>
    </location>
</feature>
<feature type="disulfide bond" evidence="4">
    <location>
        <begin position="110"/>
        <end position="187"/>
    </location>
</feature>
<feature type="cross-link" description="Glycyl lysine isopeptide (Lys-Gly) (interchain with G-Cter in ubiquitin)" evidence="2">
    <location>
        <position position="332"/>
    </location>
</feature>
<comment type="function">
    <text evidence="2 3">Receptor for the C-X-C chemokine CXCL12/SDF-1 that transduces a signal by increasing intracellular calcium ion levels and enhancing MAPK1/MAPK3 activation. Involved in the AKT signaling cascade (By similarity). Plays a role in regulation of cell migration, e.g. during wound healing. Acts as a receptor for extracellular ubiquitin; leading to enhanced intracellular calcium ions and reduced cellular cAMP levels. Binds bacterial lipopolysaccharide (LPS) et mediates LPS-induced inflammatory response, including TNF secretion by monocytes (By similarity). Involved in hematopoiesis and in cardiac ventricular septum formation. Also plays an essential role in vascularization of the gastrointestinal tract, probably by regulating vascular branching and/or remodeling processes in endothelial cells. Involved in cerebellar development. In the CNS, could mediate hippocampal-neuron survival (By similarity).</text>
</comment>
<comment type="subunit">
    <text evidence="2">Monomer. Can form homodimers. Interacts with CD164. Interacts with ARRB2; the interaction is dependent on the C-terminal phosphorylation of CXCR4 and allows activation of MAPK1 and MAPK3. Interacts with ARR3; the interaction is dependent on the C-terminal phosphorylation of CXCR4 and modulates calcium mobilization. Interacts with RNF113A; the interaction, enhanced by CXCL12, promotes CXCR4 ubiquitination and subsequent degradation. Interacts (via the cytoplasmic C-terminal) with ITCH (via the WW domains I and II); the interaction, enhanced by CXCL12, promotes CXCR4 ubiquitination and leads to its degradation. Interacts with extracellular ubiquitin. Interacts with DBN1; this interaction is enhanced by antigenic stimulation. Following LPS binding, may form a complex with GDF5, HSP90AA1 and HSPA8.</text>
</comment>
<comment type="subcellular location">
    <subcellularLocation>
        <location evidence="2">Cell membrane</location>
        <topology evidence="2">Multi-pass membrane protein</topology>
    </subcellularLocation>
    <subcellularLocation>
        <location evidence="1">Cell junction</location>
    </subcellularLocation>
    <subcellularLocation>
        <location evidence="1">Early endosome</location>
    </subcellularLocation>
    <subcellularLocation>
        <location evidence="1">Late endosome</location>
    </subcellularLocation>
    <subcellularLocation>
        <location evidence="1">Lysosome</location>
    </subcellularLocation>
    <text evidence="1">In unstimulated cells, diffuse pattern on plasma membrane. On agonist stimulation, colocalizes with ITCH at the plasma membrane where it becomes ubiquitinated (By similarity). In the presence of antigen, distributes to the immunological synapse forming at the T-cell-APC contact area, where it localizes at the peripheral and distal supramolecular activation cluster (SMAC) (By similarity).</text>
</comment>
<comment type="tissue specificity">
    <text evidence="6">Brain, heart, kidney, lung and liver.</text>
</comment>
<comment type="PTM">
    <text evidence="2">Phosphorylated on agonist stimulation. Rapidly phosphorylated on serine and threonine residues in the C-terminal. Phosphorylation at Ser-325 and Ser-326 leads to recruitment of ITCH, ubiquitination and protein degradation.</text>
</comment>
<comment type="PTM">
    <text evidence="2">Ubiquitinated after ligand binding, leading to its degradation. Ubiquitinated by ITCH at the cell membrane on agonist stimulation. The ubiquitin-dependent mechanism, endosomal sorting complex required for transport (ESCRT), then targets CXCR4 for lysosomal degradation. This process is dependent also on prior Ser-/Thr-phosphorylation in the C-terminal of CXCR4. Also binding of ARRB1 to STAM negatively regulates CXCR4 sorting to lysosomes though modulating ubiquitination of SFR5S.</text>
</comment>
<comment type="PTM">
    <text evidence="2">Sulfation is required for efficient binding of CXCL12/SDF-1alpha and promotes its dimerization.</text>
</comment>
<comment type="PTM">
    <text evidence="2">O- and N-glycosylated. N-glycosylation can mask coreceptor function. The O-glycosylation chondroitin sulfate attachment does not affect interaction with CXCL12/SDF-1alpha nor its coreceptor activity.</text>
</comment>
<comment type="similarity">
    <text evidence="4">Belongs to the G-protein coupled receptor 1 family.</text>
</comment>
<comment type="caution">
    <text evidence="8 9">Was originally thought to be a receptor for neuropeptide Y type 3 (NPY3R) (NPY3-R). Subsequent studies indicated it does not function as receptor for neuropeptide Y.</text>
</comment>
<keyword id="KW-0965">Cell junction</keyword>
<keyword id="KW-1003">Cell membrane</keyword>
<keyword id="KW-1015">Disulfide bond</keyword>
<keyword id="KW-0967">Endosome</keyword>
<keyword id="KW-0297">G-protein coupled receptor</keyword>
<keyword id="KW-0325">Glycoprotein</keyword>
<keyword id="KW-1017">Isopeptide bond</keyword>
<keyword id="KW-0458">Lysosome</keyword>
<keyword id="KW-0472">Membrane</keyword>
<keyword id="KW-0597">Phosphoprotein</keyword>
<keyword id="KW-0654">Proteoglycan</keyword>
<keyword id="KW-0675">Receptor</keyword>
<keyword id="KW-1185">Reference proteome</keyword>
<keyword id="KW-0765">Sulfation</keyword>
<keyword id="KW-0807">Transducer</keyword>
<keyword id="KW-0812">Transmembrane</keyword>
<keyword id="KW-1133">Transmembrane helix</keyword>
<keyword id="KW-0832">Ubl conjugation</keyword>
<evidence type="ECO:0000250" key="1"/>
<evidence type="ECO:0000250" key="2">
    <source>
        <dbReference type="UniProtKB" id="P61073"/>
    </source>
</evidence>
<evidence type="ECO:0000250" key="3">
    <source>
        <dbReference type="UniProtKB" id="P70658"/>
    </source>
</evidence>
<evidence type="ECO:0000255" key="4">
    <source>
        <dbReference type="PROSITE-ProRule" id="PRU00521"/>
    </source>
</evidence>
<evidence type="ECO:0000256" key="5">
    <source>
        <dbReference type="SAM" id="MobiDB-lite"/>
    </source>
</evidence>
<evidence type="ECO:0000269" key="6">
    <source>
    </source>
</evidence>
<evidence type="ECO:0000305" key="7"/>
<evidence type="ECO:0000305" key="8">
    <source>
    </source>
</evidence>
<evidence type="ECO:0000305" key="9">
    <source>
    </source>
</evidence>
<protein>
    <recommendedName>
        <fullName>C-X-C chemokine receptor type 4</fullName>
        <shortName>CXC-R4</shortName>
        <shortName>CXCR-4</shortName>
    </recommendedName>
    <alternativeName>
        <fullName>Fusin</fullName>
    </alternativeName>
    <alternativeName>
        <fullName>LCR1</fullName>
    </alternativeName>
    <alternativeName>
        <fullName>Leukocyte-derived seven transmembrane domain receptor</fullName>
        <shortName>LESTR</shortName>
    </alternativeName>
    <alternativeName>
        <fullName>Stromal cell-derived factor 1 receptor</fullName>
        <shortName>SDF-1 receptor</shortName>
    </alternativeName>
    <cdAntigenName>CD184</cdAntigenName>
</protein>